<reference key="1">
    <citation type="submission" date="2007-12" db="EMBL/GenBank/DDBJ databases">
        <title>Complete sequence of Methylobacterium extorquens PA1.</title>
        <authorList>
            <consortium name="US DOE Joint Genome Institute"/>
            <person name="Copeland A."/>
            <person name="Lucas S."/>
            <person name="Lapidus A."/>
            <person name="Barry K."/>
            <person name="Glavina del Rio T."/>
            <person name="Dalin E."/>
            <person name="Tice H."/>
            <person name="Pitluck S."/>
            <person name="Saunders E."/>
            <person name="Brettin T."/>
            <person name="Bruce D."/>
            <person name="Detter J.C."/>
            <person name="Han C."/>
            <person name="Schmutz J."/>
            <person name="Larimer F."/>
            <person name="Land M."/>
            <person name="Hauser L."/>
            <person name="Kyrpides N."/>
            <person name="Kim E."/>
            <person name="Marx C."/>
            <person name="Richardson P."/>
        </authorList>
    </citation>
    <scope>NUCLEOTIDE SEQUENCE [LARGE SCALE GENOMIC DNA]</scope>
    <source>
        <strain>PA1</strain>
    </source>
</reference>
<dbReference type="EC" id="7.1.1.-" evidence="1"/>
<dbReference type="EMBL" id="CP000908">
    <property type="protein sequence ID" value="ABY29487.1"/>
    <property type="molecule type" value="Genomic_DNA"/>
</dbReference>
<dbReference type="RefSeq" id="WP_012252756.1">
    <property type="nucleotide sequence ID" value="NC_010172.1"/>
</dbReference>
<dbReference type="SMR" id="A9W1N1"/>
<dbReference type="KEGG" id="mex:Mext_1083"/>
<dbReference type="eggNOG" id="COG0852">
    <property type="taxonomic scope" value="Bacteria"/>
</dbReference>
<dbReference type="HOGENOM" id="CLU_042628_2_1_5"/>
<dbReference type="BioCyc" id="MEXT419610:MEXT_RS05435-MONOMER"/>
<dbReference type="GO" id="GO:0005886">
    <property type="term" value="C:plasma membrane"/>
    <property type="evidence" value="ECO:0007669"/>
    <property type="project" value="UniProtKB-SubCell"/>
</dbReference>
<dbReference type="GO" id="GO:0008137">
    <property type="term" value="F:NADH dehydrogenase (ubiquinone) activity"/>
    <property type="evidence" value="ECO:0007669"/>
    <property type="project" value="InterPro"/>
</dbReference>
<dbReference type="GO" id="GO:0050136">
    <property type="term" value="F:NADH:ubiquinone reductase (non-electrogenic) activity"/>
    <property type="evidence" value="ECO:0007669"/>
    <property type="project" value="UniProtKB-UniRule"/>
</dbReference>
<dbReference type="GO" id="GO:0048038">
    <property type="term" value="F:quinone binding"/>
    <property type="evidence" value="ECO:0007669"/>
    <property type="project" value="UniProtKB-KW"/>
</dbReference>
<dbReference type="Gene3D" id="3.30.460.80">
    <property type="entry name" value="NADH:ubiquinone oxidoreductase, 30kDa subunit"/>
    <property type="match status" value="1"/>
</dbReference>
<dbReference type="HAMAP" id="MF_01357">
    <property type="entry name" value="NDH1_NuoC"/>
    <property type="match status" value="1"/>
</dbReference>
<dbReference type="InterPro" id="IPR010218">
    <property type="entry name" value="NADH_DH_suC"/>
</dbReference>
<dbReference type="InterPro" id="IPR037232">
    <property type="entry name" value="NADH_quin_OxRdtase_su_C/D-like"/>
</dbReference>
<dbReference type="InterPro" id="IPR001268">
    <property type="entry name" value="NADH_UbQ_OxRdtase_30kDa_su"/>
</dbReference>
<dbReference type="InterPro" id="IPR020396">
    <property type="entry name" value="NADH_UbQ_OxRdtase_CS"/>
</dbReference>
<dbReference type="NCBIfam" id="TIGR01961">
    <property type="entry name" value="NuoC_fam"/>
    <property type="match status" value="1"/>
</dbReference>
<dbReference type="NCBIfam" id="NF004730">
    <property type="entry name" value="PRK06074.1-1"/>
    <property type="match status" value="1"/>
</dbReference>
<dbReference type="NCBIfam" id="NF004733">
    <property type="entry name" value="PRK06074.1-5"/>
    <property type="match status" value="1"/>
</dbReference>
<dbReference type="PANTHER" id="PTHR10884:SF14">
    <property type="entry name" value="NADH DEHYDROGENASE [UBIQUINONE] IRON-SULFUR PROTEIN 3, MITOCHONDRIAL"/>
    <property type="match status" value="1"/>
</dbReference>
<dbReference type="PANTHER" id="PTHR10884">
    <property type="entry name" value="NADH DEHYDROGENASE UBIQUINONE IRON-SULFUR PROTEIN 3"/>
    <property type="match status" value="1"/>
</dbReference>
<dbReference type="Pfam" id="PF00329">
    <property type="entry name" value="Complex1_30kDa"/>
    <property type="match status" value="1"/>
</dbReference>
<dbReference type="SUPFAM" id="SSF143243">
    <property type="entry name" value="Nqo5-like"/>
    <property type="match status" value="1"/>
</dbReference>
<dbReference type="PROSITE" id="PS00542">
    <property type="entry name" value="COMPLEX1_30K"/>
    <property type="match status" value="1"/>
</dbReference>
<keyword id="KW-0997">Cell inner membrane</keyword>
<keyword id="KW-1003">Cell membrane</keyword>
<keyword id="KW-0472">Membrane</keyword>
<keyword id="KW-0520">NAD</keyword>
<keyword id="KW-0874">Quinone</keyword>
<keyword id="KW-1278">Translocase</keyword>
<keyword id="KW-0813">Transport</keyword>
<keyword id="KW-0830">Ubiquinone</keyword>
<proteinExistence type="inferred from homology"/>
<evidence type="ECO:0000255" key="1">
    <source>
        <dbReference type="HAMAP-Rule" id="MF_01357"/>
    </source>
</evidence>
<comment type="function">
    <text evidence="1">NDH-1 shuttles electrons from NADH, via FMN and iron-sulfur (Fe-S) centers, to quinones in the respiratory chain. The immediate electron acceptor for the enzyme in this species is believed to be ubiquinone. Couples the redox reaction to proton translocation (for every two electrons transferred, four hydrogen ions are translocated across the cytoplasmic membrane), and thus conserves the redox energy in a proton gradient.</text>
</comment>
<comment type="catalytic activity">
    <reaction evidence="1">
        <text>a quinone + NADH + 5 H(+)(in) = a quinol + NAD(+) + 4 H(+)(out)</text>
        <dbReference type="Rhea" id="RHEA:57888"/>
        <dbReference type="ChEBI" id="CHEBI:15378"/>
        <dbReference type="ChEBI" id="CHEBI:24646"/>
        <dbReference type="ChEBI" id="CHEBI:57540"/>
        <dbReference type="ChEBI" id="CHEBI:57945"/>
        <dbReference type="ChEBI" id="CHEBI:132124"/>
    </reaction>
</comment>
<comment type="subunit">
    <text evidence="1">NDH-1 is composed of 14 different subunits. Subunits NuoB, C, D, E, F, and G constitute the peripheral sector of the complex.</text>
</comment>
<comment type="subcellular location">
    <subcellularLocation>
        <location evidence="1">Cell inner membrane</location>
        <topology evidence="1">Peripheral membrane protein</topology>
        <orientation evidence="1">Cytoplasmic side</orientation>
    </subcellularLocation>
</comment>
<comment type="similarity">
    <text evidence="1">Belongs to the complex I 30 kDa subunit family.</text>
</comment>
<name>NUOC_METEP</name>
<protein>
    <recommendedName>
        <fullName evidence="1">NADH-quinone oxidoreductase subunit C</fullName>
        <ecNumber evidence="1">7.1.1.-</ecNumber>
    </recommendedName>
    <alternativeName>
        <fullName evidence="1">NADH dehydrogenase I subunit C</fullName>
    </alternativeName>
    <alternativeName>
        <fullName evidence="1">NDH-1 subunit C</fullName>
    </alternativeName>
</protein>
<gene>
    <name evidence="1" type="primary">nuoC</name>
    <name type="ordered locus">Mext_1083</name>
</gene>
<feature type="chain" id="PRO_0000358125" description="NADH-quinone oxidoreductase subunit C">
    <location>
        <begin position="1"/>
        <end position="219"/>
    </location>
</feature>
<organism>
    <name type="scientific">Methylorubrum extorquens (strain PA1)</name>
    <name type="common">Methylobacterium extorquens</name>
    <dbReference type="NCBI Taxonomy" id="419610"/>
    <lineage>
        <taxon>Bacteria</taxon>
        <taxon>Pseudomonadati</taxon>
        <taxon>Pseudomonadota</taxon>
        <taxon>Alphaproteobacteria</taxon>
        <taxon>Hyphomicrobiales</taxon>
        <taxon>Methylobacteriaceae</taxon>
        <taxon>Methylorubrum</taxon>
    </lineage>
</organism>
<sequence length="219" mass="24842">MEAITTNGITLRRTVAAVQGEDALRAMGERIAGALGPAVTEWAITRGELTLVVQGSDIVYALTYLRDEPACAFRCFIDICGVDYPQRARRFDVVYHLLSLRHNMRVRVKVQTDAATPVPSAIPVFPAANWYERETYDLYGILFSGHPDLRRLLTDYGFEGHPLRKDFPLTGFVEVRYDQDEARVVYEPVKLTQEFRNFDFLSPWEGTDYVLPGDEKTSS</sequence>
<accession>A9W1N1</accession>